<accession>A9KTA4</accession>
<dbReference type="EC" id="2.4.2.22" evidence="1"/>
<dbReference type="EMBL" id="CP000885">
    <property type="protein sequence ID" value="ABX43734.1"/>
    <property type="molecule type" value="Genomic_DNA"/>
</dbReference>
<dbReference type="RefSeq" id="WP_012201383.1">
    <property type="nucleotide sequence ID" value="NC_010001.1"/>
</dbReference>
<dbReference type="SMR" id="A9KTA4"/>
<dbReference type="STRING" id="357809.Cphy_3381"/>
<dbReference type="KEGG" id="cpy:Cphy_3381"/>
<dbReference type="eggNOG" id="COG0503">
    <property type="taxonomic scope" value="Bacteria"/>
</dbReference>
<dbReference type="HOGENOM" id="CLU_099015_0_0_9"/>
<dbReference type="OrthoDB" id="9790678at2"/>
<dbReference type="UniPathway" id="UPA00602">
    <property type="reaction ID" value="UER00658"/>
</dbReference>
<dbReference type="Proteomes" id="UP000000370">
    <property type="component" value="Chromosome"/>
</dbReference>
<dbReference type="GO" id="GO:0005737">
    <property type="term" value="C:cytoplasm"/>
    <property type="evidence" value="ECO:0007669"/>
    <property type="project" value="UniProtKB-SubCell"/>
</dbReference>
<dbReference type="GO" id="GO:0000310">
    <property type="term" value="F:xanthine phosphoribosyltransferase activity"/>
    <property type="evidence" value="ECO:0007669"/>
    <property type="project" value="UniProtKB-UniRule"/>
</dbReference>
<dbReference type="GO" id="GO:0006166">
    <property type="term" value="P:purine ribonucleoside salvage"/>
    <property type="evidence" value="ECO:0007669"/>
    <property type="project" value="UniProtKB-KW"/>
</dbReference>
<dbReference type="GO" id="GO:0046110">
    <property type="term" value="P:xanthine metabolic process"/>
    <property type="evidence" value="ECO:0007669"/>
    <property type="project" value="InterPro"/>
</dbReference>
<dbReference type="GO" id="GO:0032265">
    <property type="term" value="P:XMP salvage"/>
    <property type="evidence" value="ECO:0007669"/>
    <property type="project" value="UniProtKB-UniRule"/>
</dbReference>
<dbReference type="CDD" id="cd06223">
    <property type="entry name" value="PRTases_typeI"/>
    <property type="match status" value="1"/>
</dbReference>
<dbReference type="Gene3D" id="3.40.50.2020">
    <property type="match status" value="1"/>
</dbReference>
<dbReference type="HAMAP" id="MF_01184">
    <property type="entry name" value="XPRTase"/>
    <property type="match status" value="1"/>
</dbReference>
<dbReference type="InterPro" id="IPR000836">
    <property type="entry name" value="PRibTrfase_dom"/>
</dbReference>
<dbReference type="InterPro" id="IPR029057">
    <property type="entry name" value="PRTase-like"/>
</dbReference>
<dbReference type="InterPro" id="IPR050118">
    <property type="entry name" value="Pur/Pyrimidine_PRTase"/>
</dbReference>
<dbReference type="InterPro" id="IPR010079">
    <property type="entry name" value="Xanthine_PRibTrfase"/>
</dbReference>
<dbReference type="NCBIfam" id="NF006671">
    <property type="entry name" value="PRK09219.1"/>
    <property type="match status" value="1"/>
</dbReference>
<dbReference type="NCBIfam" id="TIGR01744">
    <property type="entry name" value="XPRTase"/>
    <property type="match status" value="1"/>
</dbReference>
<dbReference type="PANTHER" id="PTHR43864">
    <property type="entry name" value="HYPOXANTHINE/GUANINE PHOSPHORIBOSYLTRANSFERASE"/>
    <property type="match status" value="1"/>
</dbReference>
<dbReference type="PANTHER" id="PTHR43864:SF1">
    <property type="entry name" value="XANTHINE PHOSPHORIBOSYLTRANSFERASE"/>
    <property type="match status" value="1"/>
</dbReference>
<dbReference type="Pfam" id="PF00156">
    <property type="entry name" value="Pribosyltran"/>
    <property type="match status" value="1"/>
</dbReference>
<dbReference type="SUPFAM" id="SSF53271">
    <property type="entry name" value="PRTase-like"/>
    <property type="match status" value="1"/>
</dbReference>
<protein>
    <recommendedName>
        <fullName evidence="1">Xanthine phosphoribosyltransferase</fullName>
        <shortName evidence="1">XPRTase</shortName>
        <ecNumber evidence="1">2.4.2.22</ecNumber>
    </recommendedName>
</protein>
<evidence type="ECO:0000255" key="1">
    <source>
        <dbReference type="HAMAP-Rule" id="MF_01184"/>
    </source>
</evidence>
<keyword id="KW-0963">Cytoplasm</keyword>
<keyword id="KW-0328">Glycosyltransferase</keyword>
<keyword id="KW-0660">Purine salvage</keyword>
<keyword id="KW-1185">Reference proteome</keyword>
<keyword id="KW-0808">Transferase</keyword>
<sequence>MQLLKDRIRKDGIVKQGNVLKVDSFLNHQMDIELINEIGKEFKRLFEKEKITKILTIEASGIGIACIVAQYFNVPVVFAKKAQSINIEGEVFATKIESFTHKKTYDVIVSKKFLKPSDRVLIIDDFLANGCALVGLIDLVISSGASVEGIGIVIEKGFQSGGEIIREMGIHLESLAIVDSMNAEDGTVVFRGDK</sequence>
<reference key="1">
    <citation type="submission" date="2007-11" db="EMBL/GenBank/DDBJ databases">
        <title>Complete genome sequence of Clostridium phytofermentans ISDg.</title>
        <authorList>
            <person name="Leschine S.B."/>
            <person name="Warnick T.A."/>
            <person name="Blanchard J.L."/>
            <person name="Schnell D.J."/>
            <person name="Petit E.L."/>
            <person name="LaTouf W.G."/>
            <person name="Copeland A."/>
            <person name="Lucas S."/>
            <person name="Lapidus A."/>
            <person name="Barry K."/>
            <person name="Glavina del Rio T."/>
            <person name="Dalin E."/>
            <person name="Tice H."/>
            <person name="Pitluck S."/>
            <person name="Kiss H."/>
            <person name="Brettin T."/>
            <person name="Bruce D."/>
            <person name="Detter J.C."/>
            <person name="Han C."/>
            <person name="Kuske C."/>
            <person name="Schmutz J."/>
            <person name="Larimer F."/>
            <person name="Land M."/>
            <person name="Hauser L."/>
            <person name="Kyrpides N."/>
            <person name="Kim E.A."/>
            <person name="Richardson P."/>
        </authorList>
    </citation>
    <scope>NUCLEOTIDE SEQUENCE [LARGE SCALE GENOMIC DNA]</scope>
    <source>
        <strain>ATCC 700394 / DSM 18823 / ISDg</strain>
    </source>
</reference>
<proteinExistence type="inferred from homology"/>
<organism>
    <name type="scientific">Lachnoclostridium phytofermentans (strain ATCC 700394 / DSM 18823 / ISDg)</name>
    <name type="common">Clostridium phytofermentans</name>
    <dbReference type="NCBI Taxonomy" id="357809"/>
    <lineage>
        <taxon>Bacteria</taxon>
        <taxon>Bacillati</taxon>
        <taxon>Bacillota</taxon>
        <taxon>Clostridia</taxon>
        <taxon>Lachnospirales</taxon>
        <taxon>Lachnospiraceae</taxon>
    </lineage>
</organism>
<comment type="function">
    <text evidence="1">Converts the preformed base xanthine, a product of nucleic acid breakdown, to xanthosine 5'-monophosphate (XMP), so it can be reused for RNA or DNA synthesis.</text>
</comment>
<comment type="catalytic activity">
    <reaction evidence="1">
        <text>XMP + diphosphate = xanthine + 5-phospho-alpha-D-ribose 1-diphosphate</text>
        <dbReference type="Rhea" id="RHEA:10800"/>
        <dbReference type="ChEBI" id="CHEBI:17712"/>
        <dbReference type="ChEBI" id="CHEBI:33019"/>
        <dbReference type="ChEBI" id="CHEBI:57464"/>
        <dbReference type="ChEBI" id="CHEBI:58017"/>
        <dbReference type="EC" id="2.4.2.22"/>
    </reaction>
</comment>
<comment type="pathway">
    <text evidence="1">Purine metabolism; XMP biosynthesis via salvage pathway; XMP from xanthine: step 1/1.</text>
</comment>
<comment type="subunit">
    <text evidence="1">Homodimer.</text>
</comment>
<comment type="subcellular location">
    <subcellularLocation>
        <location evidence="1">Cytoplasm</location>
    </subcellularLocation>
</comment>
<comment type="similarity">
    <text evidence="1">Belongs to the purine/pyrimidine phosphoribosyltransferase family. Xpt subfamily.</text>
</comment>
<name>XPT_LACP7</name>
<gene>
    <name evidence="1" type="primary">xpt</name>
    <name type="ordered locus">Cphy_3381</name>
</gene>
<feature type="chain" id="PRO_0000339693" description="Xanthine phosphoribosyltransferase">
    <location>
        <begin position="1"/>
        <end position="194"/>
    </location>
</feature>
<feature type="binding site" evidence="1">
    <location>
        <position position="20"/>
    </location>
    <ligand>
        <name>xanthine</name>
        <dbReference type="ChEBI" id="CHEBI:17712"/>
    </ligand>
</feature>
<feature type="binding site" evidence="1">
    <location>
        <position position="27"/>
    </location>
    <ligand>
        <name>xanthine</name>
        <dbReference type="ChEBI" id="CHEBI:17712"/>
    </ligand>
</feature>
<feature type="binding site" evidence="1">
    <location>
        <begin position="128"/>
        <end position="132"/>
    </location>
    <ligand>
        <name>5-phospho-alpha-D-ribose 1-diphosphate</name>
        <dbReference type="ChEBI" id="CHEBI:58017"/>
    </ligand>
</feature>
<feature type="binding site" evidence="1">
    <location>
        <position position="156"/>
    </location>
    <ligand>
        <name>xanthine</name>
        <dbReference type="ChEBI" id="CHEBI:17712"/>
    </ligand>
</feature>